<evidence type="ECO:0000255" key="1">
    <source>
        <dbReference type="HAMAP-Rule" id="MF_00860"/>
    </source>
</evidence>
<accession>P29684</accession>
<keyword id="KW-0113">Calvin cycle</keyword>
<keyword id="KW-0120">Carbon dioxide fixation</keyword>
<keyword id="KW-0150">Chloroplast</keyword>
<keyword id="KW-0601">Photorespiration</keyword>
<keyword id="KW-0602">Photosynthesis</keyword>
<keyword id="KW-0934">Plastid</keyword>
<keyword id="KW-0809">Transit peptide</keyword>
<reference key="1">
    <citation type="journal article" date="1991" name="Plant Mol. Biol.">
        <title>Nucleotide sequence of a cDNA clone encoding the precursor of ribulose-1,5-bisphosphate carboxylase small subunit from Hevea brasiliensis (rubber tree).</title>
        <authorList>
            <person name="Chye M.-L."/>
            <person name="Tan S."/>
            <person name="Tan C.-T."/>
            <person name="Kush A."/>
            <person name="Chua N.-H."/>
        </authorList>
    </citation>
    <scope>NUCLEOTIDE SEQUENCE [MRNA]</scope>
</reference>
<sequence>MASSMLSTAAVACINRASPAQASMVAPFTGLKSTSAFPTTRKTTTDITSIASNGGRVQCMQVWPPRGKKFYETLSYLPPLTREQLAKEVEYLLRKGWVPCLEFELEHGTVYREYHRSPGYYDGRYWTMWKLPMFGCTDAVQVLQELDEMIKAYPDCYGRIIGFDNVRQVQCISFLAYKPKGAE</sequence>
<organism>
    <name type="scientific">Hevea brasiliensis</name>
    <name type="common">Para rubber tree</name>
    <name type="synonym">Siphonia brasiliensis</name>
    <dbReference type="NCBI Taxonomy" id="3981"/>
    <lineage>
        <taxon>Eukaryota</taxon>
        <taxon>Viridiplantae</taxon>
        <taxon>Streptophyta</taxon>
        <taxon>Embryophyta</taxon>
        <taxon>Tracheophyta</taxon>
        <taxon>Spermatophyta</taxon>
        <taxon>Magnoliopsida</taxon>
        <taxon>eudicotyledons</taxon>
        <taxon>Gunneridae</taxon>
        <taxon>Pentapetalae</taxon>
        <taxon>rosids</taxon>
        <taxon>fabids</taxon>
        <taxon>Malpighiales</taxon>
        <taxon>Euphorbiaceae</taxon>
        <taxon>Crotonoideae</taxon>
        <taxon>Micrandreae</taxon>
        <taxon>Hevea</taxon>
    </lineage>
</organism>
<feature type="transit peptide" description="Chloroplast" evidence="1">
    <location>
        <begin position="1"/>
        <end position="58"/>
    </location>
</feature>
<feature type="chain" id="PRO_0000031508" description="Ribulose bisphosphate carboxylase small subunit, chloroplastic" evidence="1">
    <location>
        <begin position="59"/>
        <end position="183"/>
    </location>
</feature>
<proteinExistence type="evidence at transcript level"/>
<protein>
    <recommendedName>
        <fullName evidence="1">Ribulose bisphosphate carboxylase small subunit, chloroplastic</fullName>
        <shortName evidence="1">RuBisCO small subunit</shortName>
    </recommendedName>
</protein>
<comment type="function">
    <text evidence="1">RuBisCO catalyzes two reactions: the carboxylation of D-ribulose 1,5-bisphosphate, the primary event in carbon dioxide fixation, as well as the oxidative fragmentation of the pentose substrate. Both reactions occur simultaneously and in competition at the same active site. Although the small subunit is not catalytic it is essential for maximal activity.</text>
</comment>
<comment type="subunit">
    <text evidence="1">Heterohexadecamer of 8 large and 8 small subunits.</text>
</comment>
<comment type="subcellular location">
    <subcellularLocation>
        <location evidence="1">Plastid</location>
        <location evidence="1">Chloroplast</location>
    </subcellularLocation>
</comment>
<comment type="miscellaneous">
    <text evidence="1">The basic functional RuBisCO is composed of a large chain homodimer in a 'head-to-tail' conformation. In form I RuBisCO this homodimer is arranged in a barrel-like tetramer with the small subunits forming a tetrameric 'cap' on each end of the 'barrel'.</text>
</comment>
<comment type="similarity">
    <text evidence="1">Belongs to the RuBisCO small chain family.</text>
</comment>
<name>RBS_HEVBR</name>
<gene>
    <name evidence="1" type="primary">RBCS</name>
    <name type="synonym">RBSS</name>
</gene>
<dbReference type="EMBL" id="M60274">
    <property type="protein sequence ID" value="AAA33361.1"/>
    <property type="molecule type" value="mRNA"/>
</dbReference>
<dbReference type="PIR" id="S16272">
    <property type="entry name" value="S16272"/>
</dbReference>
<dbReference type="SMR" id="P29684"/>
<dbReference type="OrthoDB" id="561at2759"/>
<dbReference type="GO" id="GO:0009507">
    <property type="term" value="C:chloroplast"/>
    <property type="evidence" value="ECO:0007669"/>
    <property type="project" value="UniProtKB-SubCell"/>
</dbReference>
<dbReference type="GO" id="GO:0016984">
    <property type="term" value="F:ribulose-bisphosphate carboxylase activity"/>
    <property type="evidence" value="ECO:0007669"/>
    <property type="project" value="UniProtKB-UniRule"/>
</dbReference>
<dbReference type="GO" id="GO:0009853">
    <property type="term" value="P:photorespiration"/>
    <property type="evidence" value="ECO:0007669"/>
    <property type="project" value="UniProtKB-KW"/>
</dbReference>
<dbReference type="GO" id="GO:0019253">
    <property type="term" value="P:reductive pentose-phosphate cycle"/>
    <property type="evidence" value="ECO:0007669"/>
    <property type="project" value="UniProtKB-UniRule"/>
</dbReference>
<dbReference type="CDD" id="cd03527">
    <property type="entry name" value="RuBisCO_small"/>
    <property type="match status" value="1"/>
</dbReference>
<dbReference type="FunFam" id="3.30.190.10:FF:000001">
    <property type="entry name" value="Ribulose bisphosphate carboxylase small chain, chloroplastic"/>
    <property type="match status" value="1"/>
</dbReference>
<dbReference type="Gene3D" id="3.30.190.10">
    <property type="entry name" value="Ribulose bisphosphate carboxylase, small subunit"/>
    <property type="match status" value="1"/>
</dbReference>
<dbReference type="HAMAP" id="MF_00859">
    <property type="entry name" value="RuBisCO_S_bact"/>
    <property type="match status" value="1"/>
</dbReference>
<dbReference type="InterPro" id="IPR024681">
    <property type="entry name" value="RuBisCO_ssu"/>
</dbReference>
<dbReference type="InterPro" id="IPR000894">
    <property type="entry name" value="RuBisCO_ssu_dom"/>
</dbReference>
<dbReference type="InterPro" id="IPR024680">
    <property type="entry name" value="RuBisCO_ssu_N"/>
</dbReference>
<dbReference type="InterPro" id="IPR036385">
    <property type="entry name" value="RuBisCO_ssu_sf"/>
</dbReference>
<dbReference type="PANTHER" id="PTHR31262">
    <property type="entry name" value="RIBULOSE BISPHOSPHATE CARBOXYLASE SMALL CHAIN 1, CHLOROPLASTIC"/>
    <property type="match status" value="1"/>
</dbReference>
<dbReference type="PANTHER" id="PTHR31262:SF19">
    <property type="entry name" value="RIBULOSE BISPHOSPHATE CARBOXYLASE SMALL SUBUNIT, CHLOROPLASTIC 2"/>
    <property type="match status" value="1"/>
</dbReference>
<dbReference type="Pfam" id="PF12338">
    <property type="entry name" value="RbcS"/>
    <property type="match status" value="1"/>
</dbReference>
<dbReference type="Pfam" id="PF00101">
    <property type="entry name" value="RuBisCO_small"/>
    <property type="match status" value="1"/>
</dbReference>
<dbReference type="PRINTS" id="PR00152">
    <property type="entry name" value="RUBISCOSMALL"/>
</dbReference>
<dbReference type="SMART" id="SM00961">
    <property type="entry name" value="RuBisCO_small"/>
    <property type="match status" value="1"/>
</dbReference>
<dbReference type="SUPFAM" id="SSF55239">
    <property type="entry name" value="RuBisCO, small subunit"/>
    <property type="match status" value="1"/>
</dbReference>